<dbReference type="EMBL" id="CP002685">
    <property type="protein sequence ID" value="AEC06585.1"/>
    <property type="molecule type" value="Genomic_DNA"/>
</dbReference>
<dbReference type="PIR" id="A84548">
    <property type="entry name" value="A84548"/>
</dbReference>
<dbReference type="RefSeq" id="NP_179301.1">
    <property type="nucleotide sequence ID" value="NM_127264.2"/>
</dbReference>
<dbReference type="SMR" id="Q7XJT7"/>
<dbReference type="FunCoup" id="Q7XJT7">
    <property type="interactions" value="293"/>
</dbReference>
<dbReference type="STRING" id="3702.Q7XJT7"/>
<dbReference type="iPTMnet" id="Q7XJT7"/>
<dbReference type="PaxDb" id="3702-AT2G17090.1"/>
<dbReference type="EnsemblPlants" id="AT2G17090.1">
    <property type="protein sequence ID" value="AT2G17090.1"/>
    <property type="gene ID" value="AT2G17090"/>
</dbReference>
<dbReference type="GeneID" id="816214"/>
<dbReference type="Gramene" id="AT2G17090.1">
    <property type="protein sequence ID" value="AT2G17090.1"/>
    <property type="gene ID" value="AT2G17090"/>
</dbReference>
<dbReference type="KEGG" id="ath:AT2G17090"/>
<dbReference type="Araport" id="AT2G17090"/>
<dbReference type="TAIR" id="AT2G17090">
    <property type="gene designation" value="SSP"/>
</dbReference>
<dbReference type="eggNOG" id="ENOG502QQT6">
    <property type="taxonomic scope" value="Eukaryota"/>
</dbReference>
<dbReference type="HOGENOM" id="CLU_000288_15_0_1"/>
<dbReference type="InParanoid" id="Q7XJT7"/>
<dbReference type="OMA" id="SFEEWIQ"/>
<dbReference type="PhylomeDB" id="Q7XJT7"/>
<dbReference type="PRO" id="PR:Q7XJT7"/>
<dbReference type="Proteomes" id="UP000006548">
    <property type="component" value="Chromosome 2"/>
</dbReference>
<dbReference type="ExpressionAtlas" id="Q7XJT7">
    <property type="expression patterns" value="baseline and differential"/>
</dbReference>
<dbReference type="GO" id="GO:0009898">
    <property type="term" value="C:cytoplasmic side of plasma membrane"/>
    <property type="evidence" value="ECO:0000314"/>
    <property type="project" value="TAIR"/>
</dbReference>
<dbReference type="GO" id="GO:0005524">
    <property type="term" value="F:ATP binding"/>
    <property type="evidence" value="ECO:0007669"/>
    <property type="project" value="UniProtKB-KW"/>
</dbReference>
<dbReference type="GO" id="GO:0004674">
    <property type="term" value="F:protein serine/threonine kinase activity"/>
    <property type="evidence" value="ECO:0007669"/>
    <property type="project" value="UniProtKB-KW"/>
</dbReference>
<dbReference type="GO" id="GO:0009742">
    <property type="term" value="P:brassinosteroid mediated signaling pathway"/>
    <property type="evidence" value="ECO:0007669"/>
    <property type="project" value="UniProtKB-KW"/>
</dbReference>
<dbReference type="GO" id="GO:1902533">
    <property type="term" value="P:positive regulation of intracellular signal transduction"/>
    <property type="evidence" value="ECO:0000316"/>
    <property type="project" value="TAIR"/>
</dbReference>
<dbReference type="GO" id="GO:0010098">
    <property type="term" value="P:suspensor development"/>
    <property type="evidence" value="ECO:0000315"/>
    <property type="project" value="TAIR"/>
</dbReference>
<dbReference type="GO" id="GO:0080159">
    <property type="term" value="P:zygote elongation"/>
    <property type="evidence" value="ECO:0000315"/>
    <property type="project" value="TAIR"/>
</dbReference>
<dbReference type="FunFam" id="1.10.510.10:FF:001414">
    <property type="entry name" value="Probable inactive receptor-like kinase BSK12"/>
    <property type="match status" value="1"/>
</dbReference>
<dbReference type="Gene3D" id="3.30.200.20">
    <property type="entry name" value="Phosphorylase Kinase, domain 1"/>
    <property type="match status" value="1"/>
</dbReference>
<dbReference type="Gene3D" id="1.25.40.10">
    <property type="entry name" value="Tetratricopeptide repeat domain"/>
    <property type="match status" value="1"/>
</dbReference>
<dbReference type="Gene3D" id="1.10.510.10">
    <property type="entry name" value="Transferase(Phosphotransferase) domain 1"/>
    <property type="match status" value="1"/>
</dbReference>
<dbReference type="InterPro" id="IPR045845">
    <property type="entry name" value="BSK"/>
</dbReference>
<dbReference type="InterPro" id="IPR011009">
    <property type="entry name" value="Kinase-like_dom_sf"/>
</dbReference>
<dbReference type="InterPro" id="IPR000719">
    <property type="entry name" value="Prot_kinase_dom"/>
</dbReference>
<dbReference type="InterPro" id="IPR001245">
    <property type="entry name" value="Ser-Thr/Tyr_kinase_cat_dom"/>
</dbReference>
<dbReference type="InterPro" id="IPR011990">
    <property type="entry name" value="TPR-like_helical_dom_sf"/>
</dbReference>
<dbReference type="PANTHER" id="PTHR45863">
    <property type="entry name" value="SERINE/THREONINE-PROTEIN KINASE BSK5"/>
    <property type="match status" value="1"/>
</dbReference>
<dbReference type="PANTHER" id="PTHR45863:SF10">
    <property type="entry name" value="SERINE_THREONINE-PROTEIN KINASE BSK-RELATED"/>
    <property type="match status" value="1"/>
</dbReference>
<dbReference type="Pfam" id="PF07714">
    <property type="entry name" value="PK_Tyr_Ser-Thr"/>
    <property type="match status" value="1"/>
</dbReference>
<dbReference type="SUPFAM" id="SSF56112">
    <property type="entry name" value="Protein kinase-like (PK-like)"/>
    <property type="match status" value="1"/>
</dbReference>
<dbReference type="SUPFAM" id="SSF48452">
    <property type="entry name" value="TPR-like"/>
    <property type="match status" value="1"/>
</dbReference>
<dbReference type="PROSITE" id="PS50011">
    <property type="entry name" value="PROTEIN_KINASE_DOM"/>
    <property type="match status" value="1"/>
</dbReference>
<comment type="function">
    <text evidence="4">Probable inactive protein kinase that activates the YODA MAP kinase cascade, which regulates the asymmetric first division and embryo polarity, by promoting the elongation of the zygote and the development of its basal daughter cell into the extra-embryonic suspensor. Acts as an adapter at the plasma membrane, possibly by recruiting and binding an activator.</text>
</comment>
<comment type="subunit">
    <text evidence="5">Interacts with YDA.</text>
</comment>
<comment type="subcellular location">
    <subcellularLocation>
        <location evidence="4">Cell membrane</location>
        <topology evidence="4">Lipid-anchor</topology>
    </subcellularLocation>
</comment>
<comment type="tissue specificity">
    <text evidence="4">Expressed at the mRNA level in the sperm cells in mature pollen, but the protein is only detectable in the zygote and the micropylar endosperm upon fertilization.</text>
</comment>
<comment type="developmental stage">
    <text evidence="4">Transiently expressed at the protein level in the zygote upon fertilization. No longer detected by the time of the first division.</text>
</comment>
<comment type="domain">
    <text evidence="1">The protein kinase domain is predicted to be catalytically inactive.</text>
</comment>
<comment type="PTM">
    <text evidence="4">Diacylation-mediated membrane association is essential for BSK12 function.</text>
</comment>
<comment type="miscellaneous">
    <text evidence="4">BSK12 exerts a paternal effect on embryonic patterning. Transcripts produced but not translated in the sperm cells are delivered to the seed where they become translated, resulting in a transient accumulation of the protein in both products of the double fertilization, the zygote and the central cell.</text>
</comment>
<comment type="similarity">
    <text evidence="7">Belongs to the protein kinase superfamily. Ser/Thr protein kinase family.</text>
</comment>
<gene>
    <name evidence="7" type="primary">BSK12</name>
    <name evidence="6" type="synonym">SSP</name>
    <name type="ordered locus">At2g17090</name>
    <name type="ORF">F6P23.23</name>
</gene>
<accession>Q7XJT7</accession>
<proteinExistence type="evidence at protein level"/>
<reference key="1">
    <citation type="journal article" date="1999" name="Nature">
        <title>Sequence and analysis of chromosome 2 of the plant Arabidopsis thaliana.</title>
        <authorList>
            <person name="Lin X."/>
            <person name="Kaul S."/>
            <person name="Rounsley S.D."/>
            <person name="Shea T.P."/>
            <person name="Benito M.-I."/>
            <person name="Town C.D."/>
            <person name="Fujii C.Y."/>
            <person name="Mason T.M."/>
            <person name="Bowman C.L."/>
            <person name="Barnstead M.E."/>
            <person name="Feldblyum T.V."/>
            <person name="Buell C.R."/>
            <person name="Ketchum K.A."/>
            <person name="Lee J.J."/>
            <person name="Ronning C.M."/>
            <person name="Koo H.L."/>
            <person name="Moffat K.S."/>
            <person name="Cronin L.A."/>
            <person name="Shen M."/>
            <person name="Pai G."/>
            <person name="Van Aken S."/>
            <person name="Umayam L."/>
            <person name="Tallon L.J."/>
            <person name="Gill J.E."/>
            <person name="Adams M.D."/>
            <person name="Carrera A.J."/>
            <person name="Creasy T.H."/>
            <person name="Goodman H.M."/>
            <person name="Somerville C.R."/>
            <person name="Copenhaver G.P."/>
            <person name="Preuss D."/>
            <person name="Nierman W.C."/>
            <person name="White O."/>
            <person name="Eisen J.A."/>
            <person name="Salzberg S.L."/>
            <person name="Fraser C.M."/>
            <person name="Venter J.C."/>
        </authorList>
    </citation>
    <scope>NUCLEOTIDE SEQUENCE [LARGE SCALE GENOMIC DNA]</scope>
    <source>
        <strain>cv. Columbia</strain>
    </source>
</reference>
<reference key="2">
    <citation type="journal article" date="2017" name="Plant J.">
        <title>Araport11: a complete reannotation of the Arabidopsis thaliana reference genome.</title>
        <authorList>
            <person name="Cheng C.Y."/>
            <person name="Krishnakumar V."/>
            <person name="Chan A.P."/>
            <person name="Thibaud-Nissen F."/>
            <person name="Schobel S."/>
            <person name="Town C.D."/>
        </authorList>
    </citation>
    <scope>GENOME REANNOTATION</scope>
    <source>
        <strain>cv. Columbia</strain>
    </source>
</reference>
<reference key="3">
    <citation type="journal article" date="2003" name="J. Biol. Chem.">
        <title>Unexpected protein families including cell defense components feature in the N-myristoylome of a higher eukaryote.</title>
        <authorList>
            <person name="Boisson B."/>
            <person name="Giglione C."/>
            <person name="Meinnel T."/>
        </authorList>
    </citation>
    <scope>MYRISTOYLATION AT GLY-2</scope>
</reference>
<reference key="4">
    <citation type="journal article" date="2009" name="Science">
        <title>Paternal control of embryonic patterning in Arabidopsis thaliana.</title>
        <authorList>
            <person name="Bayer M."/>
            <person name="Nawy T."/>
            <person name="Giglione C."/>
            <person name="Galli M."/>
            <person name="Meinnel T."/>
            <person name="Lukowitz W."/>
        </authorList>
    </citation>
    <scope>FUNCTION</scope>
    <scope>MUTAGENESIS OF GLY-2; 3-CYS-CYS-4; LYS-78; 300-TYR--LYS-465 AND 431-TRP--LYS-465</scope>
    <scope>MYRISTOYLATION AT GLY-2</scope>
    <scope>PALMITOYLATION AT CYS-3 AND CYS-4</scope>
    <scope>SUBCELLULAR LOCATION</scope>
    <scope>TISSUE SPECIFICITY</scope>
    <scope>DEVELOPMENTAL STAGE</scope>
</reference>
<reference key="5">
    <citation type="journal article" date="2017" name="Sci. Rep.">
        <title>The integration of Gbeta and MAPK signaling cascade in zygote development.</title>
        <authorList>
            <person name="Yuan G.L."/>
            <person name="Li H.J."/>
            <person name="Yang W.C."/>
        </authorList>
    </citation>
    <scope>INTERACTION WITH YDA</scope>
</reference>
<sequence length="465" mass="52281">MGCCYSLSSTVDPVQDHTTDASSEPRNGGGEDPPLTKFSFSALKTATNHFSPENIVSDQTSDVVFKGRLQNGGFVAIKRFNNMAWSDPKLFLEEAQRVGKLRHKRLVNLIGYCCDGDKRFLVADFMANDTLAKRLFQRKYQTMDWSIRLRVAYFVAEALDYCNTAGFASYNNLSAYKVLFDEDGDACLSCFGLMKEINNDQITTGSVNPENVIYRFGTVLVNLLSGKQIPPSHAPEMIHRKNVFKLMDPYLKGKFSIDEANVVYKLASQCLKYEGQESPNTKEIVATLETLQTRTEAPSYEVVEMTNQEKDASSSSNLSPLGEACLRMDLASIHSILVLAGYDDDKDIIELSFEEWIQEVKELQDVRRNGDRAFVEQDFKTAIACYSQFVEERSLVYPSVYARRSLSYLFCDEPEKALLDGMHAQGVFPDWPTAFYLQSVALAKLDMNTDSADTLKEAALLEVKK</sequence>
<keyword id="KW-0067">ATP-binding</keyword>
<keyword id="KW-1070">Brassinosteroid signaling pathway</keyword>
<keyword id="KW-1003">Cell membrane</keyword>
<keyword id="KW-0217">Developmental protein</keyword>
<keyword id="KW-0418">Kinase</keyword>
<keyword id="KW-0449">Lipoprotein</keyword>
<keyword id="KW-0472">Membrane</keyword>
<keyword id="KW-0519">Myristate</keyword>
<keyword id="KW-0547">Nucleotide-binding</keyword>
<keyword id="KW-0564">Palmitate</keyword>
<keyword id="KW-1185">Reference proteome</keyword>
<keyword id="KW-0723">Serine/threonine-protein kinase</keyword>
<keyword id="KW-0808">Transferase</keyword>
<feature type="initiator methionine" description="Removed" evidence="3 8">
    <location>
        <position position="1"/>
    </location>
</feature>
<feature type="chain" id="PRO_0000378324" description="Probable inactive receptor-like kinase BSK12">
    <location>
        <begin position="2"/>
        <end position="465"/>
    </location>
</feature>
<feature type="domain" description="Protein kinase" evidence="1">
    <location>
        <begin position="50"/>
        <end position="291"/>
    </location>
</feature>
<feature type="region of interest" description="Disordered" evidence="2">
    <location>
        <begin position="1"/>
        <end position="34"/>
    </location>
</feature>
<feature type="compositionally biased region" description="Polar residues" evidence="2">
    <location>
        <begin position="1"/>
        <end position="12"/>
    </location>
</feature>
<feature type="binding site" evidence="1">
    <location>
        <begin position="56"/>
        <end position="64"/>
    </location>
    <ligand>
        <name>ATP</name>
        <dbReference type="ChEBI" id="CHEBI:30616"/>
    </ligand>
</feature>
<feature type="binding site" evidence="1">
    <location>
        <position position="78"/>
    </location>
    <ligand>
        <name>ATP</name>
        <dbReference type="ChEBI" id="CHEBI:30616"/>
    </ligand>
</feature>
<feature type="lipid moiety-binding region" description="N-myristoyl glycine" evidence="3 8">
    <location>
        <position position="2"/>
    </location>
</feature>
<feature type="lipid moiety-binding region" description="S-palmitoyl cysteine" evidence="8">
    <location>
        <position position="3"/>
    </location>
</feature>
<feature type="lipid moiety-binding region" description="S-palmitoyl cysteine" evidence="8">
    <location>
        <position position="4"/>
    </location>
</feature>
<feature type="mutagenesis site" description="Loss of both N-myristoylation and S-palmitoylation; cytoplasmic localization." evidence="4">
    <original>G</original>
    <variation>A</variation>
    <location>
        <position position="2"/>
    </location>
</feature>
<feature type="mutagenesis site" description="No effect on N-myristoylation in vitro, but cytoplasmic localization." evidence="4">
    <original>CC</original>
    <variation>SS</variation>
    <location>
        <begin position="3"/>
        <end position="4"/>
    </location>
</feature>
<feature type="mutagenesis site" description="No effect." evidence="4">
    <original>K</original>
    <variation>R</variation>
    <location>
        <position position="78"/>
    </location>
</feature>
<feature type="mutagenesis site" description="Loss of function." evidence="4">
    <location>
        <begin position="300"/>
        <end position="465"/>
    </location>
</feature>
<feature type="mutagenesis site" description="Loss of function." evidence="4">
    <location>
        <begin position="431"/>
        <end position="465"/>
    </location>
</feature>
<organism>
    <name type="scientific">Arabidopsis thaliana</name>
    <name type="common">Mouse-ear cress</name>
    <dbReference type="NCBI Taxonomy" id="3702"/>
    <lineage>
        <taxon>Eukaryota</taxon>
        <taxon>Viridiplantae</taxon>
        <taxon>Streptophyta</taxon>
        <taxon>Embryophyta</taxon>
        <taxon>Tracheophyta</taxon>
        <taxon>Spermatophyta</taxon>
        <taxon>Magnoliopsida</taxon>
        <taxon>eudicotyledons</taxon>
        <taxon>Gunneridae</taxon>
        <taxon>Pentapetalae</taxon>
        <taxon>rosids</taxon>
        <taxon>malvids</taxon>
        <taxon>Brassicales</taxon>
        <taxon>Brassicaceae</taxon>
        <taxon>Camelineae</taxon>
        <taxon>Arabidopsis</taxon>
    </lineage>
</organism>
<name>BSK12_ARATH</name>
<evidence type="ECO:0000255" key="1">
    <source>
        <dbReference type="PROSITE-ProRule" id="PRU00159"/>
    </source>
</evidence>
<evidence type="ECO:0000256" key="2">
    <source>
        <dbReference type="SAM" id="MobiDB-lite"/>
    </source>
</evidence>
<evidence type="ECO:0000269" key="3">
    <source>
    </source>
</evidence>
<evidence type="ECO:0000269" key="4">
    <source>
    </source>
</evidence>
<evidence type="ECO:0000269" key="5">
    <source>
    </source>
</evidence>
<evidence type="ECO:0000303" key="6">
    <source>
    </source>
</evidence>
<evidence type="ECO:0000305" key="7"/>
<evidence type="ECO:0000305" key="8">
    <source>
    </source>
</evidence>
<protein>
    <recommendedName>
        <fullName evidence="7">Probable inactive receptor-like kinase BSK12</fullName>
    </recommendedName>
    <alternativeName>
        <fullName evidence="7">Brassinosteroid-signaling kinase 12</fullName>
    </alternativeName>
    <alternativeName>
        <fullName evidence="6">Protein SHORT SUSPENSOR</fullName>
    </alternativeName>
</protein>